<sequence>MGTNKIPKTLNGNLVLILIITIMMVTHSHGFQLEIRNELSGRYRKLVYKCWSRDNDFGWRQNWPGQYKDWSFAISLFHTYFYCHFRTAYGRVDKQLVASWELKQECGDRRKCTWVVKKDGLYLRQWKTKFFSNKYGNERWNVYIEHDVLKKSWS</sequence>
<feature type="signal peptide" evidence="1">
    <location>
        <begin position="1"/>
        <end position="30"/>
    </location>
</feature>
<feature type="chain" id="PRO_5009344601" description="S-protein homolog 12">
    <location>
        <begin position="31"/>
        <end position="154"/>
    </location>
</feature>
<feature type="sequence conflict" description="In Ref. 5; AAM64369." evidence="3" ref="5">
    <original>G</original>
    <variation>E</variation>
    <location>
        <position position="12"/>
    </location>
</feature>
<feature type="sequence conflict" description="In Ref. 5; AAM64369." evidence="3" ref="5">
    <original>YR</original>
    <variation>W</variation>
    <location>
        <begin position="43"/>
        <end position="44"/>
    </location>
</feature>
<dbReference type="EMBL" id="AF149413">
    <property type="protein sequence ID" value="AAD40130.1"/>
    <property type="status" value="ALT_SEQ"/>
    <property type="molecule type" value="Genomic_DNA"/>
</dbReference>
<dbReference type="EMBL" id="CP002688">
    <property type="protein sequence ID" value="AED93519.1"/>
    <property type="molecule type" value="Genomic_DNA"/>
</dbReference>
<dbReference type="EMBL" id="DQ446985">
    <property type="protein sequence ID" value="ABE66182.1"/>
    <property type="molecule type" value="mRNA"/>
</dbReference>
<dbReference type="EMBL" id="DQ653307">
    <property type="protein sequence ID" value="ABK28714.1"/>
    <property type="status" value="ALT_SEQ"/>
    <property type="molecule type" value="mRNA"/>
</dbReference>
<dbReference type="EMBL" id="AK175640">
    <property type="protein sequence ID" value="BAD43403.1"/>
    <property type="molecule type" value="mRNA"/>
</dbReference>
<dbReference type="EMBL" id="AK175836">
    <property type="protein sequence ID" value="BAD43599.1"/>
    <property type="molecule type" value="mRNA"/>
</dbReference>
<dbReference type="EMBL" id="AY086297">
    <property type="protein sequence ID" value="AAM64369.1"/>
    <property type="molecule type" value="mRNA"/>
</dbReference>
<dbReference type="RefSeq" id="NP_568481.1">
    <property type="nucleotide sequence ID" value="NM_122507.3"/>
</dbReference>
<dbReference type="SMR" id="Q680N1"/>
<dbReference type="STRING" id="3702.Q680N1"/>
<dbReference type="PaxDb" id="3702-AT5G26060.1"/>
<dbReference type="EnsemblPlants" id="AT5G26060.1">
    <property type="protein sequence ID" value="AT5G26060.1"/>
    <property type="gene ID" value="AT5G26060"/>
</dbReference>
<dbReference type="GeneID" id="832675"/>
<dbReference type="Gramene" id="AT5G26060.1">
    <property type="protein sequence ID" value="AT5G26060.1"/>
    <property type="gene ID" value="AT5G26060"/>
</dbReference>
<dbReference type="KEGG" id="ath:AT5G26060"/>
<dbReference type="Araport" id="AT5G26060"/>
<dbReference type="TAIR" id="AT5G26060"/>
<dbReference type="eggNOG" id="ENOG502R1FN">
    <property type="taxonomic scope" value="Eukaryota"/>
</dbReference>
<dbReference type="HOGENOM" id="CLU_1654536_0_0_1"/>
<dbReference type="InParanoid" id="Q680N1"/>
<dbReference type="OMA" id="KYGNERW"/>
<dbReference type="PhylomeDB" id="Q680N1"/>
<dbReference type="PRO" id="PR:Q680N1"/>
<dbReference type="Proteomes" id="UP000006548">
    <property type="component" value="Chromosome 5"/>
</dbReference>
<dbReference type="ExpressionAtlas" id="Q680N1">
    <property type="expression patterns" value="baseline and differential"/>
</dbReference>
<dbReference type="GO" id="GO:0005576">
    <property type="term" value="C:extracellular region"/>
    <property type="evidence" value="ECO:0007669"/>
    <property type="project" value="UniProtKB-SubCell"/>
</dbReference>
<dbReference type="GO" id="GO:0060320">
    <property type="term" value="P:rejection of self pollen"/>
    <property type="evidence" value="ECO:0007669"/>
    <property type="project" value="UniProtKB-KW"/>
</dbReference>
<dbReference type="InterPro" id="IPR010264">
    <property type="entry name" value="Self-incomp_S1"/>
</dbReference>
<dbReference type="PANTHER" id="PTHR31232">
    <property type="match status" value="1"/>
</dbReference>
<dbReference type="PANTHER" id="PTHR31232:SF48">
    <property type="entry name" value="S-PROTEIN HOMOLOG 12"/>
    <property type="match status" value="1"/>
</dbReference>
<dbReference type="Pfam" id="PF05938">
    <property type="entry name" value="Self-incomp_S1"/>
    <property type="match status" value="1"/>
</dbReference>
<gene>
    <name evidence="2" type="primary">SPH12</name>
    <name evidence="5" type="ordered locus">At5g26060</name>
    <name evidence="6" type="ORF">T1N24.10</name>
</gene>
<keyword id="KW-1185">Reference proteome</keyword>
<keyword id="KW-0964">Secreted</keyword>
<keyword id="KW-0713">Self-incompatibility</keyword>
<keyword id="KW-0732">Signal</keyword>
<organism>
    <name type="scientific">Arabidopsis thaliana</name>
    <name type="common">Mouse-ear cress</name>
    <dbReference type="NCBI Taxonomy" id="3702"/>
    <lineage>
        <taxon>Eukaryota</taxon>
        <taxon>Viridiplantae</taxon>
        <taxon>Streptophyta</taxon>
        <taxon>Embryophyta</taxon>
        <taxon>Tracheophyta</taxon>
        <taxon>Spermatophyta</taxon>
        <taxon>Magnoliopsida</taxon>
        <taxon>eudicotyledons</taxon>
        <taxon>Gunneridae</taxon>
        <taxon>Pentapetalae</taxon>
        <taxon>rosids</taxon>
        <taxon>malvids</taxon>
        <taxon>Brassicales</taxon>
        <taxon>Brassicaceae</taxon>
        <taxon>Camelineae</taxon>
        <taxon>Arabidopsis</taxon>
    </lineage>
</organism>
<evidence type="ECO:0000255" key="1"/>
<evidence type="ECO:0000303" key="2">
    <source>
    </source>
</evidence>
<evidence type="ECO:0000305" key="3"/>
<evidence type="ECO:0000305" key="4">
    <source>
    </source>
</evidence>
<evidence type="ECO:0000312" key="5">
    <source>
        <dbReference type="Araport" id="AT5G26060"/>
    </source>
</evidence>
<evidence type="ECO:0000312" key="6">
    <source>
        <dbReference type="EMBL" id="AAD40130.1"/>
    </source>
</evidence>
<comment type="subcellular location">
    <subcellularLocation>
        <location evidence="4">Secreted</location>
    </subcellularLocation>
</comment>
<comment type="similarity">
    <text evidence="3">Belongs to the plant self-incompatibility (S1) protein family.</text>
</comment>
<comment type="sequence caution" evidence="3">
    <conflict type="erroneous gene model prediction">
        <sequence resource="EMBL-CDS" id="AAD40130"/>
    </conflict>
</comment>
<comment type="sequence caution" evidence="3">
    <conflict type="erroneous termination">
        <sequence resource="EMBL-CDS" id="ABK28714"/>
    </conflict>
    <text>Extended C-terminus.</text>
</comment>
<proteinExistence type="evidence at transcript level"/>
<accession>Q680N1</accession>
<accession>A0MFI1</accession>
<accession>Q8LD00</accession>
<accession>Q9XH01</accession>
<reference key="1">
    <citation type="journal article" date="2000" name="Nature">
        <title>Sequence and analysis of chromosome 5 of the plant Arabidopsis thaliana.</title>
        <authorList>
            <person name="Tabata S."/>
            <person name="Kaneko T."/>
            <person name="Nakamura Y."/>
            <person name="Kotani H."/>
            <person name="Kato T."/>
            <person name="Asamizu E."/>
            <person name="Miyajima N."/>
            <person name="Sasamoto S."/>
            <person name="Kimura T."/>
            <person name="Hosouchi T."/>
            <person name="Kawashima K."/>
            <person name="Kohara M."/>
            <person name="Matsumoto M."/>
            <person name="Matsuno A."/>
            <person name="Muraki A."/>
            <person name="Nakayama S."/>
            <person name="Nakazaki N."/>
            <person name="Naruo K."/>
            <person name="Okumura S."/>
            <person name="Shinpo S."/>
            <person name="Takeuchi C."/>
            <person name="Wada T."/>
            <person name="Watanabe A."/>
            <person name="Yamada M."/>
            <person name="Yasuda M."/>
            <person name="Sato S."/>
            <person name="de la Bastide M."/>
            <person name="Huang E."/>
            <person name="Spiegel L."/>
            <person name="Gnoj L."/>
            <person name="O'Shaughnessy A."/>
            <person name="Preston R."/>
            <person name="Habermann K."/>
            <person name="Murray J."/>
            <person name="Johnson D."/>
            <person name="Rohlfing T."/>
            <person name="Nelson J."/>
            <person name="Stoneking T."/>
            <person name="Pepin K."/>
            <person name="Spieth J."/>
            <person name="Sekhon M."/>
            <person name="Armstrong J."/>
            <person name="Becker M."/>
            <person name="Belter E."/>
            <person name="Cordum H."/>
            <person name="Cordes M."/>
            <person name="Courtney L."/>
            <person name="Courtney W."/>
            <person name="Dante M."/>
            <person name="Du H."/>
            <person name="Edwards J."/>
            <person name="Fryman J."/>
            <person name="Haakensen B."/>
            <person name="Lamar E."/>
            <person name="Latreille P."/>
            <person name="Leonard S."/>
            <person name="Meyer R."/>
            <person name="Mulvaney E."/>
            <person name="Ozersky P."/>
            <person name="Riley A."/>
            <person name="Strowmatt C."/>
            <person name="Wagner-McPherson C."/>
            <person name="Wollam A."/>
            <person name="Yoakum M."/>
            <person name="Bell M."/>
            <person name="Dedhia N."/>
            <person name="Parnell L."/>
            <person name="Shah R."/>
            <person name="Rodriguez M."/>
            <person name="Hoon See L."/>
            <person name="Vil D."/>
            <person name="Baker J."/>
            <person name="Kirchoff K."/>
            <person name="Toth K."/>
            <person name="King L."/>
            <person name="Bahret A."/>
            <person name="Miller B."/>
            <person name="Marra M.A."/>
            <person name="Martienssen R."/>
            <person name="McCombie W.R."/>
            <person name="Wilson R.K."/>
            <person name="Murphy G."/>
            <person name="Bancroft I."/>
            <person name="Volckaert G."/>
            <person name="Wambutt R."/>
            <person name="Duesterhoeft A."/>
            <person name="Stiekema W."/>
            <person name="Pohl T."/>
            <person name="Entian K.-D."/>
            <person name="Terryn N."/>
            <person name="Hartley N."/>
            <person name="Bent E."/>
            <person name="Johnson S."/>
            <person name="Langham S.-A."/>
            <person name="McCullagh B."/>
            <person name="Robben J."/>
            <person name="Grymonprez B."/>
            <person name="Zimmermann W."/>
            <person name="Ramsperger U."/>
            <person name="Wedler H."/>
            <person name="Balke K."/>
            <person name="Wedler E."/>
            <person name="Peters S."/>
            <person name="van Staveren M."/>
            <person name="Dirkse W."/>
            <person name="Mooijman P."/>
            <person name="Klein Lankhorst R."/>
            <person name="Weitzenegger T."/>
            <person name="Bothe G."/>
            <person name="Rose M."/>
            <person name="Hauf J."/>
            <person name="Berneiser S."/>
            <person name="Hempel S."/>
            <person name="Feldpausch M."/>
            <person name="Lamberth S."/>
            <person name="Villarroel R."/>
            <person name="Gielen J."/>
            <person name="Ardiles W."/>
            <person name="Bents O."/>
            <person name="Lemcke K."/>
            <person name="Kolesov G."/>
            <person name="Mayer K.F.X."/>
            <person name="Rudd S."/>
            <person name="Schoof H."/>
            <person name="Schueller C."/>
            <person name="Zaccaria P."/>
            <person name="Mewes H.-W."/>
            <person name="Bevan M."/>
            <person name="Fransz P.F."/>
        </authorList>
    </citation>
    <scope>NUCLEOTIDE SEQUENCE [LARGE SCALE GENOMIC DNA]</scope>
    <source>
        <strain>cv. Columbia</strain>
    </source>
</reference>
<reference key="2">
    <citation type="journal article" date="2017" name="Plant J.">
        <title>Araport11: a complete reannotation of the Arabidopsis thaliana reference genome.</title>
        <authorList>
            <person name="Cheng C.Y."/>
            <person name="Krishnakumar V."/>
            <person name="Chan A.P."/>
            <person name="Thibaud-Nissen F."/>
            <person name="Schobel S."/>
            <person name="Town C.D."/>
        </authorList>
    </citation>
    <scope>GENOME REANNOTATION</scope>
    <source>
        <strain>cv. Columbia</strain>
    </source>
</reference>
<reference key="3">
    <citation type="journal article" date="2006" name="Plant Biotechnol. J.">
        <title>Simultaneous high-throughput recombinational cloning of open reading frames in closed and open configurations.</title>
        <authorList>
            <person name="Underwood B.A."/>
            <person name="Vanderhaeghen R."/>
            <person name="Whitford R."/>
            <person name="Town C.D."/>
            <person name="Hilson P."/>
        </authorList>
    </citation>
    <scope>NUCLEOTIDE SEQUENCE [LARGE SCALE MRNA]</scope>
    <source>
        <strain>cv. Columbia</strain>
    </source>
</reference>
<reference key="4">
    <citation type="submission" date="2004-09" db="EMBL/GenBank/DDBJ databases">
        <title>Large-scale analysis of RIKEN Arabidopsis full-length (RAFL) cDNAs.</title>
        <authorList>
            <person name="Totoki Y."/>
            <person name="Seki M."/>
            <person name="Ishida J."/>
            <person name="Nakajima M."/>
            <person name="Enju A."/>
            <person name="Kamiya A."/>
            <person name="Narusaka M."/>
            <person name="Shin-i T."/>
            <person name="Nakagawa M."/>
            <person name="Sakamoto N."/>
            <person name="Oishi K."/>
            <person name="Kohara Y."/>
            <person name="Kobayashi M."/>
            <person name="Toyoda A."/>
            <person name="Sakaki Y."/>
            <person name="Sakurai T."/>
            <person name="Iida K."/>
            <person name="Akiyama K."/>
            <person name="Satou M."/>
            <person name="Toyoda T."/>
            <person name="Konagaya A."/>
            <person name="Carninci P."/>
            <person name="Kawai J."/>
            <person name="Hayashizaki Y."/>
            <person name="Shinozaki K."/>
        </authorList>
    </citation>
    <scope>NUCLEOTIDE SEQUENCE [LARGE SCALE MRNA]</scope>
    <source>
        <strain>cv. Columbia</strain>
    </source>
</reference>
<reference key="5">
    <citation type="submission" date="2002-03" db="EMBL/GenBank/DDBJ databases">
        <title>Full-length cDNA from Arabidopsis thaliana.</title>
        <authorList>
            <person name="Brover V.V."/>
            <person name="Troukhan M.E."/>
            <person name="Alexandrov N.A."/>
            <person name="Lu Y.-P."/>
            <person name="Flavell R.B."/>
            <person name="Feldmann K.A."/>
        </authorList>
    </citation>
    <scope>NUCLEOTIDE SEQUENCE [LARGE SCALE MRNA]</scope>
</reference>
<reference key="6">
    <citation type="journal article" date="1999" name="Plant Mol. Biol.">
        <title>Analysis of Arabidopsis genome sequence reveals a large new gene family in plants.</title>
        <authorList>
            <person name="Ride J.P."/>
            <person name="Davies E.M."/>
            <person name="Franklin F.C.H."/>
            <person name="Marshall D.F."/>
        </authorList>
    </citation>
    <scope>GENE FAMILY</scope>
    <scope>NOMENCLATURE</scope>
    <source>
        <strain>cv. Columbia</strain>
    </source>
</reference>
<name>SPH12_ARATH</name>
<protein>
    <recommendedName>
        <fullName evidence="2">S-protein homolog 12</fullName>
    </recommendedName>
</protein>